<organism>
    <name type="scientific">Trichoderma spinulosum</name>
    <name type="common">Hypocrea spinulosa</name>
    <dbReference type="NCBI Taxonomy" id="1491020"/>
    <lineage>
        <taxon>Eukaryota</taxon>
        <taxon>Fungi</taxon>
        <taxon>Dikarya</taxon>
        <taxon>Ascomycota</taxon>
        <taxon>Pezizomycotina</taxon>
        <taxon>Sordariomycetes</taxon>
        <taxon>Hypocreomycetidae</taxon>
        <taxon>Hypocreales</taxon>
        <taxon>Hypocreaceae</taxon>
        <taxon>Trichoderma</taxon>
    </lineage>
</organism>
<reference key="1">
    <citation type="journal article" date="1997" name="Mol. Gen. Genet.">
        <title>Analysis of frequency (frq) clock gene homologs: evidence for a helix-turn-helix transcription factor.</title>
        <authorList>
            <person name="Lewis M.T."/>
            <person name="Morgan L.W."/>
            <person name="Feldman J.F."/>
        </authorList>
    </citation>
    <scope>NUCLEOTIDE SEQUENCE [GENOMIC DNA]</scope>
    <source>
        <strain>FGSC 4896</strain>
    </source>
</reference>
<sequence length="1015" mass="110973">MQPTEDLPRGTPLSSTGHPLPRRTSPEQSVTLRHHQLARDASLKASLGSAPPNDSNENSSSPRRASSGESHETGQSDAKKWFNQSNQNPTATFDSNAMDVDPPFFQKESDSSNEDKPYQFPPATIRIQSNARSSSADDYRSVIDDLTVEIQKLKEELKRYKQRGPDMLRKDKLFEIKIHGLPKRKKRELEATLREFTATLEGSPNTSSSKRNSTTKPSRHATRDRMYSGSGSKSQSKHASSSSGSHTRPVDSAYASMSTGAGSSGTSLNRPQGGSRFKTNEQKVDHYLREIPEGLYPRFVSMTEKEKKKLVVRRLEQIFTGKIGGKHVRRTQPTLTPAVSIALPAVQATSIDFSPQQQQQQQQQQQQQPKSNFITNPGATFSSVPEPLREARILPQEHQYGHVAGQKGRSHDIGSASNSNEDQTESGGNGNSSSNGNDSGTNPSPPMPPPPEQRPTRPRDLDPDRIQIPSENMEYIRHLGLVPPELLTNPPERTSFDFHPDEEGWVYLNLLCNMAQLHIMSVTPDFVRNAVVDLSAKFQLSPDGRKIRWRGGTDGTKFSSESSGDLSQRSPETDDTENTKGDNHKRQKTGHSTGDSGSSGNNLPKFGGPQVSASSESFHYKPLFLHQQSPNEQSSMEDGTLSSFGPIEESNADSRWGQSGSGASNRRKRRRDGAIIYYSGAPFCTDLSGDPGDTSPATYMLSSERERPDAQGQFARPLPFRSGSGSSITRRPLSDAHLNLGSIPKLQLLNEGVSIPELVTDSGDESSKLSMEFPWSDEPQILEVRPLEPCGLGGVRPEDHFMVVVTTRRSKLDARVGQRLEGQRKLSEEMTDIVVNRLATMSTSSPRPSVRRLSNMSDSSKIKIEYLSGRIKRLEPVSLPPPAIFFPPFSADSCSEDDFGSDGDDEFNSSEEFMSRRANPHQSDDYPDGVDLSSGDEDGEEPEDDIDASRMVDDMSLPGLGRVPRGSQASTEVVPGSSRGRSNSASAEAVLRAGGSSAATAGGVESDFSISSSQG</sequence>
<feature type="chain" id="PRO_0000087341" description="Frequency clock protein">
    <location>
        <begin position="1"/>
        <end position="1015"/>
    </location>
</feature>
<feature type="region of interest" description="Disordered" evidence="3">
    <location>
        <begin position="1"/>
        <end position="138"/>
    </location>
</feature>
<feature type="region of interest" description="Disordered" evidence="3">
    <location>
        <begin position="183"/>
        <end position="285"/>
    </location>
</feature>
<feature type="region of interest" description="Disordered" evidence="3">
    <location>
        <begin position="352"/>
        <end position="383"/>
    </location>
</feature>
<feature type="region of interest" description="Disordered" evidence="3">
    <location>
        <begin position="402"/>
        <end position="465"/>
    </location>
</feature>
<feature type="region of interest" description="Disordered" evidence="3">
    <location>
        <begin position="544"/>
        <end position="614"/>
    </location>
</feature>
<feature type="region of interest" description="Disordered" evidence="3">
    <location>
        <begin position="629"/>
        <end position="668"/>
    </location>
</feature>
<feature type="region of interest" description="Disordered" evidence="3">
    <location>
        <begin position="706"/>
        <end position="728"/>
    </location>
</feature>
<feature type="region of interest" description="Disordered" evidence="3">
    <location>
        <begin position="895"/>
        <end position="1015"/>
    </location>
</feature>
<feature type="short sequence motif" description="Nuclear localization signal" evidence="2">
    <location>
        <begin position="584"/>
        <end position="588"/>
    </location>
</feature>
<feature type="compositionally biased region" description="Low complexity" evidence="3">
    <location>
        <begin position="49"/>
        <end position="68"/>
    </location>
</feature>
<feature type="compositionally biased region" description="Basic and acidic residues" evidence="3">
    <location>
        <begin position="69"/>
        <end position="80"/>
    </location>
</feature>
<feature type="compositionally biased region" description="Polar residues" evidence="3">
    <location>
        <begin position="82"/>
        <end position="95"/>
    </location>
</feature>
<feature type="compositionally biased region" description="Basic and acidic residues" evidence="3">
    <location>
        <begin position="107"/>
        <end position="117"/>
    </location>
</feature>
<feature type="compositionally biased region" description="Low complexity" evidence="3">
    <location>
        <begin position="203"/>
        <end position="216"/>
    </location>
</feature>
<feature type="compositionally biased region" description="Low complexity" evidence="3">
    <location>
        <begin position="228"/>
        <end position="267"/>
    </location>
</feature>
<feature type="compositionally biased region" description="Low complexity" evidence="3">
    <location>
        <begin position="356"/>
        <end position="368"/>
    </location>
</feature>
<feature type="compositionally biased region" description="Polar residues" evidence="3">
    <location>
        <begin position="369"/>
        <end position="383"/>
    </location>
</feature>
<feature type="compositionally biased region" description="Low complexity" evidence="3">
    <location>
        <begin position="431"/>
        <end position="442"/>
    </location>
</feature>
<feature type="compositionally biased region" description="Pro residues" evidence="3">
    <location>
        <begin position="443"/>
        <end position="453"/>
    </location>
</feature>
<feature type="compositionally biased region" description="Basic and acidic residues" evidence="3">
    <location>
        <begin position="454"/>
        <end position="465"/>
    </location>
</feature>
<feature type="compositionally biased region" description="Polar residues" evidence="3">
    <location>
        <begin position="556"/>
        <end position="570"/>
    </location>
</feature>
<feature type="compositionally biased region" description="Low complexity" evidence="3">
    <location>
        <begin position="590"/>
        <end position="600"/>
    </location>
</feature>
<feature type="compositionally biased region" description="Polar residues" evidence="3">
    <location>
        <begin position="629"/>
        <end position="643"/>
    </location>
</feature>
<feature type="compositionally biased region" description="Acidic residues" evidence="3">
    <location>
        <begin position="895"/>
        <end position="909"/>
    </location>
</feature>
<feature type="compositionally biased region" description="Acidic residues" evidence="3">
    <location>
        <begin position="934"/>
        <end position="946"/>
    </location>
</feature>
<feature type="compositionally biased region" description="Low complexity" evidence="3">
    <location>
        <begin position="976"/>
        <end position="1003"/>
    </location>
</feature>
<name>FRQ_TRISN</name>
<evidence type="ECO:0000250" key="1"/>
<evidence type="ECO:0000255" key="2"/>
<evidence type="ECO:0000256" key="3">
    <source>
        <dbReference type="SAM" id="MobiDB-lite"/>
    </source>
</evidence>
<evidence type="ECO:0000305" key="4"/>
<comment type="function">
    <text evidence="1">Circadian clock component involved in the generation of biological rhythms, in particular in rhythm stability, period length, and temperature compensation. Behaves as a negative element in circadian transcriptional loop (By similarity).</text>
</comment>
<comment type="subcellular location">
    <subcellularLocation>
        <location evidence="4">Nucleus</location>
    </subcellularLocation>
</comment>
<comment type="similarity">
    <text evidence="4">Belongs to the FRQ family.</text>
</comment>
<dbReference type="EMBL" id="U25850">
    <property type="protein sequence ID" value="AAA68072.1"/>
    <property type="molecule type" value="Genomic_DNA"/>
</dbReference>
<dbReference type="PIR" id="T42013">
    <property type="entry name" value="T42013"/>
</dbReference>
<dbReference type="SMR" id="Q00586"/>
<dbReference type="GO" id="GO:0005737">
    <property type="term" value="C:cytoplasm"/>
    <property type="evidence" value="ECO:0007669"/>
    <property type="project" value="InterPro"/>
</dbReference>
<dbReference type="GO" id="GO:0005634">
    <property type="term" value="C:nucleus"/>
    <property type="evidence" value="ECO:0007669"/>
    <property type="project" value="UniProtKB-SubCell"/>
</dbReference>
<dbReference type="GO" id="GO:0007623">
    <property type="term" value="P:circadian rhythm"/>
    <property type="evidence" value="ECO:0007669"/>
    <property type="project" value="InterPro"/>
</dbReference>
<dbReference type="GO" id="GO:0006355">
    <property type="term" value="P:regulation of DNA-templated transcription"/>
    <property type="evidence" value="ECO:0007669"/>
    <property type="project" value="InterPro"/>
</dbReference>
<dbReference type="InterPro" id="IPR018554">
    <property type="entry name" value="FRQ"/>
</dbReference>
<dbReference type="Pfam" id="PF09421">
    <property type="entry name" value="FRQ"/>
    <property type="match status" value="1"/>
</dbReference>
<keyword id="KW-0090">Biological rhythms</keyword>
<keyword id="KW-0539">Nucleus</keyword>
<keyword id="KW-0804">Transcription</keyword>
<keyword id="KW-0805">Transcription regulation</keyword>
<proteinExistence type="inferred from homology"/>
<protein>
    <recommendedName>
        <fullName>Frequency clock protein</fullName>
    </recommendedName>
</protein>
<accession>Q00586</accession>
<gene>
    <name type="primary">FRQ</name>
</gene>